<sequence>MTYLQESSRPAVTVPKLQAMREAGEKIAMLTSYDASFAALLDRANVDVQLIGDSLGNVLQGQATTLPVTLDDIAYHTACVARAQPRGLVVADLPFGTYGTPADAFASAVKLMRAGAQMVKLEGGEWLAETVRFLVERAVPVCAHVGLTPQSVHAFGGFKVQGKTEAGAAQLLRDARAVEEAGAQLIVLEAVPTLVAAEVTRELSIPTIGIGAGAECSGQVLVLHDMLGVFPGKRPRFVKDFMQGQPSIFAAVEAYVRAVKDGSFPGPEHSF</sequence>
<dbReference type="EC" id="2.1.2.11" evidence="1"/>
<dbReference type="EMBL" id="CP000548">
    <property type="protein sequence ID" value="ABO06160.1"/>
    <property type="molecule type" value="Genomic_DNA"/>
</dbReference>
<dbReference type="RefSeq" id="WP_004194137.1">
    <property type="nucleotide sequence ID" value="NZ_CP007802.1"/>
</dbReference>
<dbReference type="SMR" id="A3MN95"/>
<dbReference type="GeneID" id="93061412"/>
<dbReference type="KEGG" id="bmaz:BM44_1039"/>
<dbReference type="KEGG" id="bmn:BMA10247_2202"/>
<dbReference type="PATRIC" id="fig|320389.8.peg.1161"/>
<dbReference type="UniPathway" id="UPA00028">
    <property type="reaction ID" value="UER00003"/>
</dbReference>
<dbReference type="GO" id="GO:0005737">
    <property type="term" value="C:cytoplasm"/>
    <property type="evidence" value="ECO:0007669"/>
    <property type="project" value="UniProtKB-SubCell"/>
</dbReference>
<dbReference type="GO" id="GO:0003864">
    <property type="term" value="F:3-methyl-2-oxobutanoate hydroxymethyltransferase activity"/>
    <property type="evidence" value="ECO:0007669"/>
    <property type="project" value="UniProtKB-UniRule"/>
</dbReference>
<dbReference type="GO" id="GO:0000287">
    <property type="term" value="F:magnesium ion binding"/>
    <property type="evidence" value="ECO:0007669"/>
    <property type="project" value="TreeGrafter"/>
</dbReference>
<dbReference type="GO" id="GO:0015940">
    <property type="term" value="P:pantothenate biosynthetic process"/>
    <property type="evidence" value="ECO:0007669"/>
    <property type="project" value="UniProtKB-UniRule"/>
</dbReference>
<dbReference type="CDD" id="cd06557">
    <property type="entry name" value="KPHMT-like"/>
    <property type="match status" value="1"/>
</dbReference>
<dbReference type="FunFam" id="3.20.20.60:FF:000003">
    <property type="entry name" value="3-methyl-2-oxobutanoate hydroxymethyltransferase"/>
    <property type="match status" value="1"/>
</dbReference>
<dbReference type="Gene3D" id="3.20.20.60">
    <property type="entry name" value="Phosphoenolpyruvate-binding domains"/>
    <property type="match status" value="1"/>
</dbReference>
<dbReference type="HAMAP" id="MF_00156">
    <property type="entry name" value="PanB"/>
    <property type="match status" value="1"/>
</dbReference>
<dbReference type="InterPro" id="IPR003700">
    <property type="entry name" value="Pantoate_hydroxy_MeTrfase"/>
</dbReference>
<dbReference type="InterPro" id="IPR015813">
    <property type="entry name" value="Pyrv/PenolPyrv_kinase-like_dom"/>
</dbReference>
<dbReference type="InterPro" id="IPR040442">
    <property type="entry name" value="Pyrv_kinase-like_dom_sf"/>
</dbReference>
<dbReference type="NCBIfam" id="TIGR00222">
    <property type="entry name" value="panB"/>
    <property type="match status" value="1"/>
</dbReference>
<dbReference type="NCBIfam" id="NF001452">
    <property type="entry name" value="PRK00311.1"/>
    <property type="match status" value="1"/>
</dbReference>
<dbReference type="PANTHER" id="PTHR20881">
    <property type="entry name" value="3-METHYL-2-OXOBUTANOATE HYDROXYMETHYLTRANSFERASE"/>
    <property type="match status" value="1"/>
</dbReference>
<dbReference type="PANTHER" id="PTHR20881:SF0">
    <property type="entry name" value="3-METHYL-2-OXOBUTANOATE HYDROXYMETHYLTRANSFERASE"/>
    <property type="match status" value="1"/>
</dbReference>
<dbReference type="Pfam" id="PF02548">
    <property type="entry name" value="Pantoate_transf"/>
    <property type="match status" value="1"/>
</dbReference>
<dbReference type="PIRSF" id="PIRSF000388">
    <property type="entry name" value="Pantoate_hydroxy_MeTrfase"/>
    <property type="match status" value="1"/>
</dbReference>
<dbReference type="SUPFAM" id="SSF51621">
    <property type="entry name" value="Phosphoenolpyruvate/pyruvate domain"/>
    <property type="match status" value="1"/>
</dbReference>
<accession>A3MN95</accession>
<proteinExistence type="inferred from homology"/>
<gene>
    <name evidence="1" type="primary">panB</name>
    <name type="ordered locus">BMA10247_2202</name>
</gene>
<comment type="function">
    <text evidence="1">Catalyzes the reversible reaction in which hydroxymethyl group from 5,10-methylenetetrahydrofolate is transferred onto alpha-ketoisovalerate to form ketopantoate.</text>
</comment>
<comment type="catalytic activity">
    <reaction evidence="1">
        <text>3-methyl-2-oxobutanoate + (6R)-5,10-methylene-5,6,7,8-tetrahydrofolate + H2O = 2-dehydropantoate + (6S)-5,6,7,8-tetrahydrofolate</text>
        <dbReference type="Rhea" id="RHEA:11824"/>
        <dbReference type="ChEBI" id="CHEBI:11561"/>
        <dbReference type="ChEBI" id="CHEBI:11851"/>
        <dbReference type="ChEBI" id="CHEBI:15377"/>
        <dbReference type="ChEBI" id="CHEBI:15636"/>
        <dbReference type="ChEBI" id="CHEBI:57453"/>
        <dbReference type="EC" id="2.1.2.11"/>
    </reaction>
</comment>
<comment type="cofactor">
    <cofactor evidence="1">
        <name>Mg(2+)</name>
        <dbReference type="ChEBI" id="CHEBI:18420"/>
    </cofactor>
    <text evidence="1">Binds 1 Mg(2+) ion per subunit.</text>
</comment>
<comment type="pathway">
    <text evidence="1">Cofactor biosynthesis; (R)-pantothenate biosynthesis; (R)-pantoate from 3-methyl-2-oxobutanoate: step 1/2.</text>
</comment>
<comment type="subunit">
    <text evidence="1">Homodecamer; pentamer of dimers.</text>
</comment>
<comment type="subcellular location">
    <subcellularLocation>
        <location evidence="1">Cytoplasm</location>
    </subcellularLocation>
</comment>
<comment type="similarity">
    <text evidence="1">Belongs to the PanB family.</text>
</comment>
<reference key="1">
    <citation type="journal article" date="2010" name="Genome Biol. Evol.">
        <title>Continuing evolution of Burkholderia mallei through genome reduction and large-scale rearrangements.</title>
        <authorList>
            <person name="Losada L."/>
            <person name="Ronning C.M."/>
            <person name="DeShazer D."/>
            <person name="Woods D."/>
            <person name="Fedorova N."/>
            <person name="Kim H.S."/>
            <person name="Shabalina S.A."/>
            <person name="Pearson T.R."/>
            <person name="Brinkac L."/>
            <person name="Tan P."/>
            <person name="Nandi T."/>
            <person name="Crabtree J."/>
            <person name="Badger J."/>
            <person name="Beckstrom-Sternberg S."/>
            <person name="Saqib M."/>
            <person name="Schutzer S.E."/>
            <person name="Keim P."/>
            <person name="Nierman W.C."/>
        </authorList>
    </citation>
    <scope>NUCLEOTIDE SEQUENCE [LARGE SCALE GENOMIC DNA]</scope>
    <source>
        <strain>NCTC 10247</strain>
    </source>
</reference>
<protein>
    <recommendedName>
        <fullName evidence="1">3-methyl-2-oxobutanoate hydroxymethyltransferase</fullName>
        <ecNumber evidence="1">2.1.2.11</ecNumber>
    </recommendedName>
    <alternativeName>
        <fullName evidence="1">Ketopantoate hydroxymethyltransferase</fullName>
        <shortName evidence="1">KPHMT</shortName>
    </alternativeName>
</protein>
<feature type="chain" id="PRO_1000011363" description="3-methyl-2-oxobutanoate hydroxymethyltransferase">
    <location>
        <begin position="1"/>
        <end position="271"/>
    </location>
</feature>
<feature type="active site" description="Proton acceptor" evidence="1">
    <location>
        <position position="189"/>
    </location>
</feature>
<feature type="binding site" evidence="1">
    <location>
        <begin position="53"/>
        <end position="54"/>
    </location>
    <ligand>
        <name>3-methyl-2-oxobutanoate</name>
        <dbReference type="ChEBI" id="CHEBI:11851"/>
    </ligand>
</feature>
<feature type="binding site" evidence="1">
    <location>
        <position position="53"/>
    </location>
    <ligand>
        <name>Mg(2+)</name>
        <dbReference type="ChEBI" id="CHEBI:18420"/>
    </ligand>
</feature>
<feature type="binding site" evidence="1">
    <location>
        <position position="92"/>
    </location>
    <ligand>
        <name>3-methyl-2-oxobutanoate</name>
        <dbReference type="ChEBI" id="CHEBI:11851"/>
    </ligand>
</feature>
<feature type="binding site" evidence="1">
    <location>
        <position position="92"/>
    </location>
    <ligand>
        <name>Mg(2+)</name>
        <dbReference type="ChEBI" id="CHEBI:18420"/>
    </ligand>
</feature>
<feature type="binding site" evidence="1">
    <location>
        <position position="120"/>
    </location>
    <ligand>
        <name>3-methyl-2-oxobutanoate</name>
        <dbReference type="ChEBI" id="CHEBI:11851"/>
    </ligand>
</feature>
<feature type="binding site" evidence="1">
    <location>
        <position position="122"/>
    </location>
    <ligand>
        <name>Mg(2+)</name>
        <dbReference type="ChEBI" id="CHEBI:18420"/>
    </ligand>
</feature>
<evidence type="ECO:0000255" key="1">
    <source>
        <dbReference type="HAMAP-Rule" id="MF_00156"/>
    </source>
</evidence>
<name>PANB_BURM7</name>
<keyword id="KW-0963">Cytoplasm</keyword>
<keyword id="KW-0460">Magnesium</keyword>
<keyword id="KW-0479">Metal-binding</keyword>
<keyword id="KW-0566">Pantothenate biosynthesis</keyword>
<keyword id="KW-0808">Transferase</keyword>
<organism>
    <name type="scientific">Burkholderia mallei (strain NCTC 10247)</name>
    <dbReference type="NCBI Taxonomy" id="320389"/>
    <lineage>
        <taxon>Bacteria</taxon>
        <taxon>Pseudomonadati</taxon>
        <taxon>Pseudomonadota</taxon>
        <taxon>Betaproteobacteria</taxon>
        <taxon>Burkholderiales</taxon>
        <taxon>Burkholderiaceae</taxon>
        <taxon>Burkholderia</taxon>
        <taxon>pseudomallei group</taxon>
    </lineage>
</organism>